<evidence type="ECO:0000255" key="1">
    <source>
        <dbReference type="HAMAP-Rule" id="MF_01837"/>
    </source>
</evidence>
<gene>
    <name evidence="1" type="primary">sasA</name>
    <name type="ordered locus">CYB_1895</name>
</gene>
<comment type="function">
    <text evidence="1">Member of the two-component regulatory system SasA/RpaA involved in genome-wide circadian gene expression. One of several clock output pathways. Participates in the Kai clock protein complex, the main circadian regulator in cyanobacteria, via its interaction with KaiC. KaiC enhances the autophosphorylation activity of SasA, which then transfers its phosphate group to RpaA to activate it. In addition to its output function, recruits fold-shifted KaiB (KaiB(fs)) to KaiC to cooperatively form the KaiB(6):KaiC(6) complex (independent of SasA kinase activity). Required for robustness of the circadian rhythm of gene expression and is involved in clock output, also required for adaptation to light/dark cycles.</text>
</comment>
<comment type="catalytic activity">
    <reaction evidence="1">
        <text>ATP + protein L-histidine = ADP + protein N-phospho-L-histidine.</text>
        <dbReference type="EC" id="2.7.13.3"/>
    </reaction>
</comment>
<comment type="subunit">
    <text evidence="1">Homooligomerizes. Interacts with KaiC. Participates in the KaiABC clock complex, whose core is composed of a KaiC homohexamer, 6 KaiB and up to 6 KaiA dimers. SasA and KaiB(fs) compete to bind to KaiC.</text>
</comment>
<comment type="domain">
    <text evidence="1">The N-terminus interacts with KaiC, while the C-terminal histidine kinase domain autophosphorylates and is probably responsible for self-oligomerization. The N-terminal domain stimulates the C-terminus to autophosphorylate.</text>
</comment>
<keyword id="KW-0067">ATP-binding</keyword>
<keyword id="KW-0090">Biological rhythms</keyword>
<keyword id="KW-0418">Kinase</keyword>
<keyword id="KW-0547">Nucleotide-binding</keyword>
<keyword id="KW-0597">Phosphoprotein</keyword>
<keyword id="KW-1185">Reference proteome</keyword>
<keyword id="KW-0808">Transferase</keyword>
<keyword id="KW-0902">Two-component regulatory system</keyword>
<name>SASA_SYNJB</name>
<dbReference type="EC" id="2.7.13.3" evidence="1"/>
<dbReference type="EMBL" id="CP000240">
    <property type="protein sequence ID" value="ABD02850.1"/>
    <property type="molecule type" value="Genomic_DNA"/>
</dbReference>
<dbReference type="RefSeq" id="WP_011433490.1">
    <property type="nucleotide sequence ID" value="NC_007776.1"/>
</dbReference>
<dbReference type="SMR" id="Q2JKD9"/>
<dbReference type="STRING" id="321332.CYB_1895"/>
<dbReference type="KEGG" id="cyb:CYB_1895"/>
<dbReference type="eggNOG" id="COG2205">
    <property type="taxonomic scope" value="Bacteria"/>
</dbReference>
<dbReference type="HOGENOM" id="CLU_723030_0_0_3"/>
<dbReference type="OrthoDB" id="9773956at2"/>
<dbReference type="Proteomes" id="UP000001938">
    <property type="component" value="Chromosome"/>
</dbReference>
<dbReference type="GO" id="GO:0005524">
    <property type="term" value="F:ATP binding"/>
    <property type="evidence" value="ECO:0007669"/>
    <property type="project" value="UniProtKB-KW"/>
</dbReference>
<dbReference type="GO" id="GO:0000155">
    <property type="term" value="F:phosphorelay sensor kinase activity"/>
    <property type="evidence" value="ECO:0007669"/>
    <property type="project" value="InterPro"/>
</dbReference>
<dbReference type="GO" id="GO:0007623">
    <property type="term" value="P:circadian rhythm"/>
    <property type="evidence" value="ECO:0007669"/>
    <property type="project" value="UniProtKB-UniRule"/>
</dbReference>
<dbReference type="CDD" id="cd00082">
    <property type="entry name" value="HisKA"/>
    <property type="match status" value="1"/>
</dbReference>
<dbReference type="FunFam" id="3.30.565.10:FF:000006">
    <property type="entry name" value="Sensor histidine kinase WalK"/>
    <property type="match status" value="1"/>
</dbReference>
<dbReference type="Gene3D" id="1.10.287.130">
    <property type="match status" value="1"/>
</dbReference>
<dbReference type="Gene3D" id="3.40.30.10">
    <property type="entry name" value="Glutaredoxin"/>
    <property type="match status" value="1"/>
</dbReference>
<dbReference type="Gene3D" id="3.30.565.10">
    <property type="entry name" value="Histidine kinase-like ATPase, C-terminal domain"/>
    <property type="match status" value="1"/>
</dbReference>
<dbReference type="HAMAP" id="MF_01837">
    <property type="entry name" value="Kinase_SasA"/>
    <property type="match status" value="1"/>
</dbReference>
<dbReference type="InterPro" id="IPR036890">
    <property type="entry name" value="HATPase_C_sf"/>
</dbReference>
<dbReference type="InterPro" id="IPR005467">
    <property type="entry name" value="His_kinase_dom"/>
</dbReference>
<dbReference type="InterPro" id="IPR003661">
    <property type="entry name" value="HisK_dim/P_dom"/>
</dbReference>
<dbReference type="InterPro" id="IPR036097">
    <property type="entry name" value="HisK_dim/P_sf"/>
</dbReference>
<dbReference type="InterPro" id="IPR011649">
    <property type="entry name" value="KaiB_domain"/>
</dbReference>
<dbReference type="InterPro" id="IPR023527">
    <property type="entry name" value="Kinase_SasA"/>
</dbReference>
<dbReference type="InterPro" id="IPR004358">
    <property type="entry name" value="Sig_transdc_His_kin-like_C"/>
</dbReference>
<dbReference type="InterPro" id="IPR036249">
    <property type="entry name" value="Thioredoxin-like_sf"/>
</dbReference>
<dbReference type="NCBIfam" id="NF006800">
    <property type="entry name" value="PRK09303.1"/>
    <property type="match status" value="1"/>
</dbReference>
<dbReference type="PANTHER" id="PTHR43547:SF2">
    <property type="entry name" value="HYBRID SIGNAL TRANSDUCTION HISTIDINE KINASE C"/>
    <property type="match status" value="1"/>
</dbReference>
<dbReference type="PANTHER" id="PTHR43547">
    <property type="entry name" value="TWO-COMPONENT HISTIDINE KINASE"/>
    <property type="match status" value="1"/>
</dbReference>
<dbReference type="Pfam" id="PF02518">
    <property type="entry name" value="HATPase_c"/>
    <property type="match status" value="1"/>
</dbReference>
<dbReference type="Pfam" id="PF00512">
    <property type="entry name" value="HisKA"/>
    <property type="match status" value="1"/>
</dbReference>
<dbReference type="Pfam" id="PF07689">
    <property type="entry name" value="KaiB"/>
    <property type="match status" value="1"/>
</dbReference>
<dbReference type="PRINTS" id="PR00344">
    <property type="entry name" value="BCTRLSENSOR"/>
</dbReference>
<dbReference type="SMART" id="SM00387">
    <property type="entry name" value="HATPase_c"/>
    <property type="match status" value="1"/>
</dbReference>
<dbReference type="SMART" id="SM00388">
    <property type="entry name" value="HisKA"/>
    <property type="match status" value="1"/>
</dbReference>
<dbReference type="SMART" id="SM01248">
    <property type="entry name" value="KaiB"/>
    <property type="match status" value="1"/>
</dbReference>
<dbReference type="SUPFAM" id="SSF55874">
    <property type="entry name" value="ATPase domain of HSP90 chaperone/DNA topoisomerase II/histidine kinase"/>
    <property type="match status" value="1"/>
</dbReference>
<dbReference type="SUPFAM" id="SSF47384">
    <property type="entry name" value="Homodimeric domain of signal transducing histidine kinase"/>
    <property type="match status" value="1"/>
</dbReference>
<dbReference type="SUPFAM" id="SSF52833">
    <property type="entry name" value="Thioredoxin-like"/>
    <property type="match status" value="1"/>
</dbReference>
<dbReference type="PROSITE" id="PS50109">
    <property type="entry name" value="HIS_KIN"/>
    <property type="match status" value="1"/>
</dbReference>
<accession>Q2JKD9</accession>
<feature type="chain" id="PRO_1000088447" description="Adaptive-response sensory kinase SasA">
    <location>
        <begin position="1"/>
        <end position="377"/>
    </location>
</feature>
<feature type="domain" description="Histidine kinase" evidence="1">
    <location>
        <begin position="154"/>
        <end position="373"/>
    </location>
</feature>
<feature type="modified residue" description="Phosphohistidine; by autocatalysis" evidence="1">
    <location>
        <position position="157"/>
    </location>
</feature>
<reference key="1">
    <citation type="journal article" date="2007" name="ISME J.">
        <title>Population level functional diversity in a microbial community revealed by comparative genomic and metagenomic analyses.</title>
        <authorList>
            <person name="Bhaya D."/>
            <person name="Grossman A.R."/>
            <person name="Steunou A.-S."/>
            <person name="Khuri N."/>
            <person name="Cohan F.M."/>
            <person name="Hamamura N."/>
            <person name="Melendrez M.C."/>
            <person name="Bateson M.M."/>
            <person name="Ward D.M."/>
            <person name="Heidelberg J.F."/>
        </authorList>
    </citation>
    <scope>NUCLEOTIDE SEQUENCE [LARGE SCALE GENOMIC DNA]</scope>
    <source>
        <strain>JA-2-3B'a(2-13)</strain>
    </source>
</reference>
<protein>
    <recommendedName>
        <fullName evidence="1">Adaptive-response sensory kinase SasA</fullName>
        <ecNumber evidence="1">2.7.13.3</ecNumber>
    </recommendedName>
    <alternativeName>
        <fullName evidence="1">Sensor histidine kinase SasA</fullName>
    </alternativeName>
</protein>
<organism>
    <name type="scientific">Synechococcus sp. (strain JA-2-3B'a(2-13))</name>
    <name type="common">Cyanobacteria bacterium Yellowstone B-Prime</name>
    <dbReference type="NCBI Taxonomy" id="321332"/>
    <lineage>
        <taxon>Bacteria</taxon>
        <taxon>Bacillati</taxon>
        <taxon>Cyanobacteriota</taxon>
        <taxon>Cyanophyceae</taxon>
        <taxon>Synechococcales</taxon>
        <taxon>Synechococcaceae</taxon>
        <taxon>Synechococcus</taxon>
    </lineage>
</organism>
<sequence>MQTSPDLTSARSVIRLLLFAKSRAVVAELEEHLRQHIQGLPGQYPAQLEVVPLEEHPYLAEHYKLVATPALVKAEPLPAQVLAGADLATQLEVWWPRWQGQAALAAHQEGAGRDPASPPTTEALLQMSEEVFLLRQERAQLREQLDFKDRVLAMLVHDLRSPLTATALAVETLQQGREGSLDKALERQLFDHARQQLRKMDSMITDILESARGAASELRIRAVETQLPGLCQAVIEELWPRIQGKRLQFQADIPVDLPSVHVDPDKIRQVLFNLLDNAIKYTPAGGSIRLDVLHRTSQKVQVTVSDTGPGIPEADQESIFSDSVRLSRDQQQEGYGIGLSLCRRIVRAHYGQIWVESSLGKGSSFHFTLPVYRLCKR</sequence>
<proteinExistence type="inferred from homology"/>